<sequence>MNASQLVAIQVLLDNAAFAALMVATALYWLAAAFRRVPLLHELGTGASAVALLSVTGLLTARWIETDHFPVSNLYESLFFLCWCVLAVHIAAEAFARQRLVGVFTLPVALGMVAFSSLTLSPAMKAGGPLVPALKSNWLMMHVSVMILSYGALMVGSLVSIAFLIVTWKQKDPELRGSSVGTGGFQKAEYTDSESTPPAGSMLSSLGVGGSETTVTLTSATATAGTALRRSNLAETLDNLSYRLIGLGFPLITVGIIAGAVWANEAWGSYWSWDPKETWSLITWFIFAAYLHARITRGWQGRRPATLAAVGFVSVWITYLGVNFLAQGLHSYGWLSGN</sequence>
<protein>
    <recommendedName>
        <fullName evidence="2">Cytochrome c biogenesis protein CcsA</fullName>
    </recommendedName>
</protein>
<name>CCSA_GLOVI</name>
<keyword id="KW-0997">Cell inner membrane</keyword>
<keyword id="KW-1003">Cell membrane</keyword>
<keyword id="KW-0201">Cytochrome c-type biogenesis</keyword>
<keyword id="KW-0472">Membrane</keyword>
<keyword id="KW-1185">Reference proteome</keyword>
<keyword id="KW-0812">Transmembrane</keyword>
<keyword id="KW-1133">Transmembrane helix</keyword>
<dbReference type="EMBL" id="BA000045">
    <property type="protein sequence ID" value="BAC89963.1"/>
    <property type="molecule type" value="Genomic_DNA"/>
</dbReference>
<dbReference type="RefSeq" id="NP_924968.1">
    <property type="nucleotide sequence ID" value="NC_005125.1"/>
</dbReference>
<dbReference type="RefSeq" id="WP_011142020.1">
    <property type="nucleotide sequence ID" value="NC_005125.1"/>
</dbReference>
<dbReference type="SMR" id="Q7NJ10"/>
<dbReference type="FunCoup" id="Q7NJ10">
    <property type="interactions" value="8"/>
</dbReference>
<dbReference type="STRING" id="251221.gene:10759514"/>
<dbReference type="EnsemblBacteria" id="BAC89963">
    <property type="protein sequence ID" value="BAC89963"/>
    <property type="gene ID" value="BAC89963"/>
</dbReference>
<dbReference type="KEGG" id="gvi:glr2022"/>
<dbReference type="PATRIC" id="fig|251221.4.peg.2056"/>
<dbReference type="eggNOG" id="COG0755">
    <property type="taxonomic scope" value="Bacteria"/>
</dbReference>
<dbReference type="HOGENOM" id="CLU_049710_2_2_3"/>
<dbReference type="InParanoid" id="Q7NJ10"/>
<dbReference type="OrthoDB" id="9814290at2"/>
<dbReference type="PhylomeDB" id="Q7NJ10"/>
<dbReference type="Proteomes" id="UP000000557">
    <property type="component" value="Chromosome"/>
</dbReference>
<dbReference type="GO" id="GO:0005886">
    <property type="term" value="C:plasma membrane"/>
    <property type="evidence" value="ECO:0007669"/>
    <property type="project" value="UniProtKB-SubCell"/>
</dbReference>
<dbReference type="GO" id="GO:0020037">
    <property type="term" value="F:heme binding"/>
    <property type="evidence" value="ECO:0007669"/>
    <property type="project" value="InterPro"/>
</dbReference>
<dbReference type="GO" id="GO:0017004">
    <property type="term" value="P:cytochrome complex assembly"/>
    <property type="evidence" value="ECO:0007669"/>
    <property type="project" value="UniProtKB-UniRule"/>
</dbReference>
<dbReference type="HAMAP" id="MF_01391">
    <property type="entry name" value="CytC_CcsA"/>
    <property type="match status" value="1"/>
</dbReference>
<dbReference type="InterPro" id="IPR002541">
    <property type="entry name" value="Cyt_c_assembly"/>
</dbReference>
<dbReference type="InterPro" id="IPR017562">
    <property type="entry name" value="Cyt_c_biogenesis_CcsA"/>
</dbReference>
<dbReference type="InterPro" id="IPR045062">
    <property type="entry name" value="Cyt_c_biogenesis_CcsA/CcmC"/>
</dbReference>
<dbReference type="NCBIfam" id="TIGR03144">
    <property type="entry name" value="cytochr_II_ccsB"/>
    <property type="match status" value="1"/>
</dbReference>
<dbReference type="PANTHER" id="PTHR30071:SF1">
    <property type="entry name" value="CYTOCHROME B_B6 PROTEIN-RELATED"/>
    <property type="match status" value="1"/>
</dbReference>
<dbReference type="PANTHER" id="PTHR30071">
    <property type="entry name" value="HEME EXPORTER PROTEIN C"/>
    <property type="match status" value="1"/>
</dbReference>
<dbReference type="Pfam" id="PF01578">
    <property type="entry name" value="Cytochrom_C_asm"/>
    <property type="match status" value="1"/>
</dbReference>
<organism>
    <name type="scientific">Gloeobacter violaceus (strain ATCC 29082 / PCC 7421)</name>
    <dbReference type="NCBI Taxonomy" id="251221"/>
    <lineage>
        <taxon>Bacteria</taxon>
        <taxon>Bacillati</taxon>
        <taxon>Cyanobacteriota</taxon>
        <taxon>Cyanophyceae</taxon>
        <taxon>Gloeobacterales</taxon>
        <taxon>Gloeobacteraceae</taxon>
        <taxon>Gloeobacter</taxon>
    </lineage>
</organism>
<evidence type="ECO:0000250" key="1"/>
<evidence type="ECO:0000255" key="2">
    <source>
        <dbReference type="HAMAP-Rule" id="MF_01391"/>
    </source>
</evidence>
<accession>Q7NJ10</accession>
<reference key="1">
    <citation type="journal article" date="2003" name="DNA Res.">
        <title>Complete genome structure of Gloeobacter violaceus PCC 7421, a cyanobacterium that lacks thylakoids.</title>
        <authorList>
            <person name="Nakamura Y."/>
            <person name="Kaneko T."/>
            <person name="Sato S."/>
            <person name="Mimuro M."/>
            <person name="Miyashita H."/>
            <person name="Tsuchiya T."/>
            <person name="Sasamoto S."/>
            <person name="Watanabe A."/>
            <person name="Kawashima K."/>
            <person name="Kishida Y."/>
            <person name="Kiyokawa C."/>
            <person name="Kohara M."/>
            <person name="Matsumoto M."/>
            <person name="Matsuno A."/>
            <person name="Nakazaki N."/>
            <person name="Shimpo S."/>
            <person name="Takeuchi C."/>
            <person name="Yamada M."/>
            <person name="Tabata S."/>
        </authorList>
    </citation>
    <scope>NUCLEOTIDE SEQUENCE [LARGE SCALE GENOMIC DNA]</scope>
    <source>
        <strain>ATCC 29082 / PCC 7421</strain>
    </source>
</reference>
<feature type="chain" id="PRO_0000353700" description="Cytochrome c biogenesis protein CcsA">
    <location>
        <begin position="1"/>
        <end position="338"/>
    </location>
</feature>
<feature type="transmembrane region" description="Helical" evidence="2">
    <location>
        <begin position="11"/>
        <end position="31"/>
    </location>
</feature>
<feature type="transmembrane region" description="Helical" evidence="2">
    <location>
        <begin position="39"/>
        <end position="59"/>
    </location>
</feature>
<feature type="transmembrane region" description="Helical" evidence="2">
    <location>
        <begin position="76"/>
        <end position="96"/>
    </location>
</feature>
<feature type="transmembrane region" description="Helical" evidence="2">
    <location>
        <begin position="100"/>
        <end position="120"/>
    </location>
</feature>
<feature type="transmembrane region" description="Helical" evidence="2">
    <location>
        <begin position="145"/>
        <end position="165"/>
    </location>
</feature>
<feature type="transmembrane region" description="Helical" evidence="2">
    <location>
        <begin position="244"/>
        <end position="264"/>
    </location>
</feature>
<feature type="transmembrane region" description="Helical" evidence="2">
    <location>
        <begin position="278"/>
        <end position="295"/>
    </location>
</feature>
<feature type="transmembrane region" description="Helical" evidence="2">
    <location>
        <begin position="305"/>
        <end position="325"/>
    </location>
</feature>
<gene>
    <name evidence="2" type="primary">ccsA</name>
    <name type="ordered locus">glr2022</name>
</gene>
<comment type="function">
    <text evidence="2">Required during biogenesis of c-type cytochromes (cytochrome c6 and cytochrome f) at the step of heme attachment.</text>
</comment>
<comment type="subunit">
    <text evidence="1">May interact with ccs1.</text>
</comment>
<comment type="subcellular location">
    <subcellularLocation>
        <location evidence="2">Cell inner membrane</location>
        <topology evidence="2">Multi-pass membrane protein</topology>
    </subcellularLocation>
</comment>
<comment type="similarity">
    <text evidence="2">Belongs to the CcmF/CycK/Ccl1/NrfE/CcsA family.</text>
</comment>
<proteinExistence type="inferred from homology"/>